<sequence length="346" mass="38583">MSGKFINHKTIVFGVITSVLLLLLLIYYVFKPEAQTQNQNINTQTIQPENTVLESATANNKQGKLPTLAASLQGTEIDCPIQVDANGKLILTVGIRSCFDYFFSSLGEKTEAELVADIRQYLLATLPESASNYAIYLLDQYVAYMHALQNLKPNAGFKSNNVDALQKVVDQMAKVQQQFFNAAEINALFGNERNLNQFNLEQMRIHANKNLTTQEKATELAKLIDELPPALADGVRVSMQFAELQQLTKEIQAKGGSAQDLRSMRESLLGPEAADRLEKVDQEEAVWQTQVNQYLSARDQILKSDANDASKQQSIAELRNSSFGTKEDLLRAQSYEVMHDQKSKGS</sequence>
<name>LIFO_ACIVR</name>
<dbReference type="EMBL" id="AF047691">
    <property type="protein sequence ID" value="AAD29442.1"/>
    <property type="molecule type" value="Genomic_DNA"/>
</dbReference>
<dbReference type="RefSeq" id="WP_004880062.1">
    <property type="nucleotide sequence ID" value="NZ_AKIQ01000014.1"/>
</dbReference>
<dbReference type="SMR" id="Q9X2S4"/>
<dbReference type="GeneID" id="58195044"/>
<dbReference type="OrthoDB" id="7025807at2"/>
<dbReference type="GO" id="GO:0005886">
    <property type="term" value="C:plasma membrane"/>
    <property type="evidence" value="ECO:0007669"/>
    <property type="project" value="UniProtKB-SubCell"/>
</dbReference>
<dbReference type="GO" id="GO:0051082">
    <property type="term" value="F:unfolded protein binding"/>
    <property type="evidence" value="ECO:0007669"/>
    <property type="project" value="UniProtKB-UniRule"/>
</dbReference>
<dbReference type="GO" id="GO:0016042">
    <property type="term" value="P:lipid catabolic process"/>
    <property type="evidence" value="ECO:0007669"/>
    <property type="project" value="UniProtKB-UniRule"/>
</dbReference>
<dbReference type="GO" id="GO:0006457">
    <property type="term" value="P:protein folding"/>
    <property type="evidence" value="ECO:0007669"/>
    <property type="project" value="UniProtKB-UniRule"/>
</dbReference>
<dbReference type="HAMAP" id="MF_00790">
    <property type="entry name" value="Lipase_chap"/>
    <property type="match status" value="1"/>
</dbReference>
<dbReference type="InterPro" id="IPR004961">
    <property type="entry name" value="Lipase_chaperone"/>
</dbReference>
<dbReference type="Pfam" id="PF03280">
    <property type="entry name" value="Lipase_chap"/>
    <property type="match status" value="1"/>
</dbReference>
<dbReference type="SUPFAM" id="SSF158855">
    <property type="entry name" value="Lipase chaperone-like"/>
    <property type="match status" value="1"/>
</dbReference>
<organism>
    <name type="scientific">Acinetobacter venetianus (strain ATCC 31012 / DSM 23050 / BCRC 14357 / CCUG 45561 / CIP 110063 / KCTC 2702 / LMG 19082 / RAG-1)</name>
    <dbReference type="NCBI Taxonomy" id="1191460"/>
    <lineage>
        <taxon>Bacteria</taxon>
        <taxon>Pseudomonadati</taxon>
        <taxon>Pseudomonadota</taxon>
        <taxon>Gammaproteobacteria</taxon>
        <taxon>Moraxellales</taxon>
        <taxon>Moraxellaceae</taxon>
        <taxon>Acinetobacter</taxon>
    </lineage>
</organism>
<comment type="function">
    <text evidence="1">May be involved in the folding of the extracellular lipase during its passage through the periplasm.</text>
</comment>
<comment type="subcellular location">
    <subcellularLocation>
        <location evidence="1">Cell inner membrane</location>
        <topology evidence="1">Single-pass membrane protein</topology>
        <orientation evidence="1">Periplasmic side</orientation>
    </subcellularLocation>
</comment>
<comment type="similarity">
    <text evidence="3">Belongs to the lipase chaperone family.</text>
</comment>
<protein>
    <recommendedName>
        <fullName>Lipase chaperone</fullName>
    </recommendedName>
    <alternativeName>
        <fullName>Lipase activator protein</fullName>
    </alternativeName>
    <alternativeName>
        <fullName>Lipase foldase</fullName>
    </alternativeName>
    <alternativeName>
        <fullName>Lipase helper protein</fullName>
    </alternativeName>
    <alternativeName>
        <fullName>Lipase modulator</fullName>
    </alternativeName>
</protein>
<evidence type="ECO:0000250" key="1"/>
<evidence type="ECO:0000255" key="2"/>
<evidence type="ECO:0000305" key="3"/>
<keyword id="KW-0997">Cell inner membrane</keyword>
<keyword id="KW-1003">Cell membrane</keyword>
<keyword id="KW-0143">Chaperone</keyword>
<keyword id="KW-0442">Lipid degradation</keyword>
<keyword id="KW-0443">Lipid metabolism</keyword>
<keyword id="KW-0472">Membrane</keyword>
<keyword id="KW-0812">Transmembrane</keyword>
<keyword id="KW-1133">Transmembrane helix</keyword>
<feature type="chain" id="PRO_0000218478" description="Lipase chaperone">
    <location>
        <begin position="1"/>
        <end position="346"/>
    </location>
</feature>
<feature type="transmembrane region" description="Helical" evidence="2">
    <location>
        <begin position="10"/>
        <end position="30"/>
    </location>
</feature>
<proteinExistence type="inferred from homology"/>
<reference key="1">
    <citation type="journal article" date="1999" name="Gene">
        <title>Cloning and sequence analysis of the lipase and lipase chaperone-encoding genes from Acinetobacter calcoaceticus RAG-1, and redefinition of a proteobacterial lipase family and an analogous lipase chaperone family.</title>
        <authorList>
            <person name="Sullivan E.R."/>
            <person name="Leahy J.G."/>
            <person name="Colwell R.R."/>
        </authorList>
    </citation>
    <scope>NUCLEOTIDE SEQUENCE [GENOMIC DNA]</scope>
    <source>
        <strain>ATCC 31012 / DSM 23050 / BCRC 14357 / CCUG 45561 / CIP 110063 / KCTC 2702 / LMG 19082 / RAG-1</strain>
    </source>
</reference>
<gene>
    <name type="primary">lifO</name>
    <name type="synonym">lipB</name>
</gene>
<accession>Q9X2S4</accession>